<reference key="1">
    <citation type="journal article" date="1999" name="Plant Physiol.">
        <title>Cloning and functional expression of a cytochrome P450 cDNA encoding 2-hydroxyisoflavanone synthase involved in biosynthesis of the isoflavonoid skeleton in licorice.</title>
        <authorList>
            <person name="Akashi T."/>
            <person name="Aoki T."/>
            <person name="Ayabe S."/>
        </authorList>
    </citation>
    <scope>NUCLEOTIDE SEQUENCE [MRNA]</scope>
    <scope>FUNCTION</scope>
    <scope>CATALYTIC ACTIVITY</scope>
    <scope>INDUCTION BY ELICITORS</scope>
    <scope>SUBCELLULAR LOCATION</scope>
</reference>
<reference key="2">
    <citation type="journal article" date="2002" name="Plant J.">
        <title>Key amino acid residues required for aryl migration catalysed by the cytochrome P450 2-hydroxyisoflavanone synthase.</title>
        <authorList>
            <person name="Sawada Y."/>
            <person name="Kinoshita K."/>
            <person name="Akashi T."/>
            <person name="Aoki T."/>
            <person name="Ayabe S."/>
        </authorList>
    </citation>
    <scope>FUNCTION</scope>
    <scope>CATALYTIC ACTIVITY</scope>
    <scope>MUTAGENESIS OF ARG-104; GLN-106; VAL-119; SER-305; SER-310 AND LYS-375</scope>
    <scope>BIOPHYSICOCHEMICAL PROPERTIES</scope>
    <scope>3D-STRUCTURE MODELING</scope>
</reference>
<reference key="3">
    <citation type="journal article" date="2005" name="Biochem. Biophys. Res. Commun.">
        <title>Multiple mutagenesis of P450 isoflavonoid synthase reveals a key active-site residue.</title>
        <authorList>
            <person name="Sawada Y."/>
            <person name="Ayabe S."/>
        </authorList>
    </citation>
    <scope>FUNCTION</scope>
    <scope>CATALYTIC ACTIVITY</scope>
    <scope>MUTAGENESIS OF SER-310; LEU-371 AND LYS-375</scope>
</reference>
<accession>Q9SXS3</accession>
<protein>
    <recommendedName>
        <fullName>2-hydroxyisoflavanone synthase</fullName>
        <shortName>2HI synthase</shortName>
        <ecNumber evidence="3 4 5">1.14.14.87</ecNumber>
    </recommendedName>
    <alternativeName>
        <fullName>CYP Ge-8</fullName>
    </alternativeName>
    <alternativeName>
        <fullName>Cytochrome P450 93C2</fullName>
    </alternativeName>
    <alternativeName>
        <fullName>Isoflavonoid synthase</fullName>
    </alternativeName>
</protein>
<name>C93C2_GLYEC</name>
<proteinExistence type="evidence at protein level"/>
<gene>
    <name type="primary">CYP93C2</name>
    <name type="synonym">IFS</name>
</gene>
<evidence type="ECO:0000250" key="1"/>
<evidence type="ECO:0000255" key="2"/>
<evidence type="ECO:0000269" key="3">
    <source>
    </source>
</evidence>
<evidence type="ECO:0000269" key="4">
    <source>
    </source>
</evidence>
<evidence type="ECO:0000269" key="5">
    <source>
    </source>
</evidence>
<evidence type="ECO:0000305" key="6"/>
<evidence type="ECO:0000305" key="7">
    <source>
    </source>
</evidence>
<evidence type="ECO:0000305" key="8">
    <source>
    </source>
</evidence>
<comment type="function">
    <text evidence="3 4 5">2-hydroxyisoflavanone synthase, which catalyzes the hydroxylation associated with 1,2-aryl migration of flavanones. Converts liquiritigenin and naringenin into highly unstable precursors of the isoflavones daidzein and genistein. Acts only on substrates with (2S)-chirality.</text>
</comment>
<comment type="catalytic activity">
    <reaction evidence="3 4 5">
        <text>(2S)-liquiritigenin + reduced [NADPH--hemoprotein reductase] + O2 = (2R,3S)-2,4',7-trihydroxyisoflavanone + oxidized [NADPH--hemoprotein reductase] + H2O + H(+)</text>
        <dbReference type="Rhea" id="RHEA:31723"/>
        <dbReference type="Rhea" id="RHEA-COMP:11964"/>
        <dbReference type="Rhea" id="RHEA-COMP:11965"/>
        <dbReference type="ChEBI" id="CHEBI:15377"/>
        <dbReference type="ChEBI" id="CHEBI:15378"/>
        <dbReference type="ChEBI" id="CHEBI:15379"/>
        <dbReference type="ChEBI" id="CHEBI:28777"/>
        <dbReference type="ChEBI" id="CHEBI:57618"/>
        <dbReference type="ChEBI" id="CHEBI:58210"/>
        <dbReference type="ChEBI" id="CHEBI:63325"/>
        <dbReference type="EC" id="1.14.14.87"/>
    </reaction>
</comment>
<comment type="catalytic activity">
    <reaction evidence="3 4 5">
        <text>(2S)-naringenin + reduced [NADPH--hemoprotein reductase] + O2 = 2-hydroxy-2,3-dihydrogenistein + oxidized [NADPH--hemoprotein reductase] + H2O + H(+)</text>
        <dbReference type="Rhea" id="RHEA:35487"/>
        <dbReference type="Rhea" id="RHEA-COMP:11964"/>
        <dbReference type="Rhea" id="RHEA-COMP:11965"/>
        <dbReference type="ChEBI" id="CHEBI:15377"/>
        <dbReference type="ChEBI" id="CHEBI:15378"/>
        <dbReference type="ChEBI" id="CHEBI:15379"/>
        <dbReference type="ChEBI" id="CHEBI:17846"/>
        <dbReference type="ChEBI" id="CHEBI:31080"/>
        <dbReference type="ChEBI" id="CHEBI:57618"/>
        <dbReference type="ChEBI" id="CHEBI:58210"/>
        <dbReference type="EC" id="1.14.14.87"/>
    </reaction>
</comment>
<comment type="cofactor">
    <cofactor evidence="1">
        <name>heme</name>
        <dbReference type="ChEBI" id="CHEBI:30413"/>
    </cofactor>
</comment>
<comment type="biophysicochemical properties">
    <kinetics>
        <KM evidence="4">8 uM for liquiritigenin</KM>
    </kinetics>
    <phDependence>
        <text evidence="4">Optimum pH is 7.5.</text>
    </phDependence>
</comment>
<comment type="subcellular location">
    <subcellularLocation>
        <location evidence="6">Microsome membrane</location>
        <topology evidence="6">Single-pass membrane protein</topology>
    </subcellularLocation>
</comment>
<comment type="induction">
    <text evidence="3">Up-regulated upon elicitation.</text>
</comment>
<comment type="miscellaneous">
    <text evidence="7 8">Lys-375 is essential for the intramolecular aryl migration of a flavanone molecule to produce the isoflavonoid skeleton (PubMed:12207646). Arg-104 and Leu-371 are essential for the correct P450 conformation (PubMed:12207646, PubMed:15809082).</text>
</comment>
<comment type="similarity">
    <text evidence="6">Belongs to the cytochrome P450 family.</text>
</comment>
<dbReference type="EC" id="1.14.14.87" evidence="3 4 5"/>
<dbReference type="EMBL" id="AB023636">
    <property type="protein sequence ID" value="BAA76380.1"/>
    <property type="molecule type" value="mRNA"/>
</dbReference>
<dbReference type="SMR" id="Q9SXS3"/>
<dbReference type="KEGG" id="ag:BAA76380"/>
<dbReference type="SABIO-RK" id="Q9SXS3"/>
<dbReference type="GO" id="GO:0005783">
    <property type="term" value="C:endoplasmic reticulum"/>
    <property type="evidence" value="ECO:0007669"/>
    <property type="project" value="UniProtKB-KW"/>
</dbReference>
<dbReference type="GO" id="GO:0043231">
    <property type="term" value="C:intracellular membrane-bounded organelle"/>
    <property type="evidence" value="ECO:0000314"/>
    <property type="project" value="UniProtKB"/>
</dbReference>
<dbReference type="GO" id="GO:0016020">
    <property type="term" value="C:membrane"/>
    <property type="evidence" value="ECO:0007669"/>
    <property type="project" value="UniProtKB-KW"/>
</dbReference>
<dbReference type="GO" id="GO:0033770">
    <property type="term" value="F:2-hydroxyisoflavanone synthase activity"/>
    <property type="evidence" value="ECO:0007669"/>
    <property type="project" value="UniProtKB-EC"/>
</dbReference>
<dbReference type="GO" id="GO:0020037">
    <property type="term" value="F:heme binding"/>
    <property type="evidence" value="ECO:0007669"/>
    <property type="project" value="InterPro"/>
</dbReference>
<dbReference type="GO" id="GO:0005506">
    <property type="term" value="F:iron ion binding"/>
    <property type="evidence" value="ECO:0007669"/>
    <property type="project" value="InterPro"/>
</dbReference>
<dbReference type="GO" id="GO:0016709">
    <property type="term" value="F:oxidoreductase activity, acting on paired donors, with incorporation or reduction of molecular oxygen, NAD(P)H as one donor, and incorporation of one atom of oxygen"/>
    <property type="evidence" value="ECO:0000314"/>
    <property type="project" value="UniProtKB"/>
</dbReference>
<dbReference type="GO" id="GO:0009717">
    <property type="term" value="P:isoflavonoid biosynthetic process"/>
    <property type="evidence" value="ECO:0000314"/>
    <property type="project" value="UniProtKB"/>
</dbReference>
<dbReference type="CDD" id="cd20655">
    <property type="entry name" value="CYP93"/>
    <property type="match status" value="1"/>
</dbReference>
<dbReference type="FunFam" id="1.10.630.10:FF:000019">
    <property type="entry name" value="Cytochrome P450 family protein"/>
    <property type="match status" value="1"/>
</dbReference>
<dbReference type="Gene3D" id="1.10.630.10">
    <property type="entry name" value="Cytochrome P450"/>
    <property type="match status" value="1"/>
</dbReference>
<dbReference type="InterPro" id="IPR001128">
    <property type="entry name" value="Cyt_P450"/>
</dbReference>
<dbReference type="InterPro" id="IPR017972">
    <property type="entry name" value="Cyt_P450_CS"/>
</dbReference>
<dbReference type="InterPro" id="IPR002401">
    <property type="entry name" value="Cyt_P450_E_grp-I"/>
</dbReference>
<dbReference type="InterPro" id="IPR036396">
    <property type="entry name" value="Cyt_P450_sf"/>
</dbReference>
<dbReference type="PANTHER" id="PTHR47944:SF17">
    <property type="entry name" value="3,9-DIHYDROXYPTEROCARPAN 6A-MONOOXYGENASE"/>
    <property type="match status" value="1"/>
</dbReference>
<dbReference type="PANTHER" id="PTHR47944">
    <property type="entry name" value="CYTOCHROME P450 98A9"/>
    <property type="match status" value="1"/>
</dbReference>
<dbReference type="Pfam" id="PF00067">
    <property type="entry name" value="p450"/>
    <property type="match status" value="1"/>
</dbReference>
<dbReference type="PRINTS" id="PR00463">
    <property type="entry name" value="EP450I"/>
</dbReference>
<dbReference type="PRINTS" id="PR00385">
    <property type="entry name" value="P450"/>
</dbReference>
<dbReference type="SUPFAM" id="SSF48264">
    <property type="entry name" value="Cytochrome P450"/>
    <property type="match status" value="1"/>
</dbReference>
<dbReference type="PROSITE" id="PS00086">
    <property type="entry name" value="CYTOCHROME_P450"/>
    <property type="match status" value="1"/>
</dbReference>
<sequence length="523" mass="59429">MLVELAITLLVIALFIHLRPTLSAKSKSLRHLPNPPSPKPRLPFVGHLHLLDKPLLHYSLIDLSKRYGPLYSLYFGSMPTVVASTPELFKLFLQTHEASSFNTRFQTSAIRRLTYDNSVAMVPFGPYWKFIRKLIMNDLLNATTVNKLRPLRSQEIRKVLRVMAQSAESQVPLNVTEELLKWTNSTISRMMLGEAEEIRDIARDVLKIFGEYSLTDFIWPLKKLKVGQYEKRIDDIFNRFDPVIERVIKKRQEIRKKRKERNGEIEEGEQSVVFLDTLLDFAEDETMEIKITKEQIKGLVVDFFSAGTDSTAVATDWALSELINNPRVFQKAREEIDAVVGKDRLVDEADVQNLPYIRSIVKETFRMHPPLPVVKRKCVQECEVDGYVIPEGALILFNVWAVGRDPKYWDRPTEFRPERFLENVGEGDQAVDLRGQHFQLLPFGSGRRMCPGVNLATAGMATLLASVIQCFDLSVVGPQGKILKGNDAKVSMEERAGLTVPRAHNLICVPVARSSAVPKLFSS</sequence>
<organism>
    <name type="scientific">Glycyrrhiza echinata</name>
    <name type="common">Licorice</name>
    <dbReference type="NCBI Taxonomy" id="46348"/>
    <lineage>
        <taxon>Eukaryota</taxon>
        <taxon>Viridiplantae</taxon>
        <taxon>Streptophyta</taxon>
        <taxon>Embryophyta</taxon>
        <taxon>Tracheophyta</taxon>
        <taxon>Spermatophyta</taxon>
        <taxon>Magnoliopsida</taxon>
        <taxon>eudicotyledons</taxon>
        <taxon>Gunneridae</taxon>
        <taxon>Pentapetalae</taxon>
        <taxon>rosids</taxon>
        <taxon>fabids</taxon>
        <taxon>Fabales</taxon>
        <taxon>Fabaceae</taxon>
        <taxon>Papilionoideae</taxon>
        <taxon>50 kb inversion clade</taxon>
        <taxon>NPAAA clade</taxon>
        <taxon>Hologalegina</taxon>
        <taxon>IRL clade</taxon>
        <taxon>Galegeae</taxon>
        <taxon>Glycyrrhiza</taxon>
    </lineage>
</organism>
<feature type="chain" id="PRO_0000419822" description="2-hydroxyisoflavanone synthase">
    <location>
        <begin position="1"/>
        <end position="523"/>
    </location>
</feature>
<feature type="transmembrane region" description="Helical" evidence="2">
    <location>
        <begin position="2"/>
        <end position="22"/>
    </location>
</feature>
<feature type="binding site" description="axial binding residue" evidence="1">
    <location>
        <position position="450"/>
    </location>
    <ligand>
        <name>heme</name>
        <dbReference type="ChEBI" id="CHEBI:30413"/>
    </ligand>
    <ligandPart>
        <name>Fe</name>
        <dbReference type="ChEBI" id="CHEBI:18248"/>
    </ligandPart>
</feature>
<feature type="mutagenesis site" description="Total loss of catalytic activity." evidence="4">
    <original>R</original>
    <variation>A</variation>
    <location>
        <position position="104"/>
    </location>
</feature>
<feature type="mutagenesis site" description="No effect on catalytic activity." evidence="4">
    <original>Q</original>
    <variation>E</variation>
    <location>
        <position position="106"/>
    </location>
</feature>
<feature type="mutagenesis site" description="No effect on catalytic activity." evidence="4">
    <original>V</original>
    <variation>L</variation>
    <location>
        <position position="119"/>
    </location>
</feature>
<feature type="mutagenesis site" description="No effect on catalytic activity." evidence="4">
    <original>S</original>
    <variation>T</variation>
    <location>
        <position position="305"/>
    </location>
</feature>
<feature type="mutagenesis site" description="Decreased intramolecular 1,2-aryl migration and increased production of 3-hydroxyflavanone and flavone." evidence="4 5">
    <original>S</original>
    <variation>A</variation>
    <variation>V</variation>
    <location>
        <position position="310"/>
    </location>
</feature>
<feature type="mutagenesis site" description="Decreased intramolecular 1,2-aryl migration and increased production of 3-hydroxyflavanone and flavone. 5% activity and production of mainly 3-hydroxyflavanone; when associated with T-375. 0.1% activity and production of only flavone; when associated with V-371 and T-375." evidence="4 5">
    <original>S</original>
    <variation>T</variation>
    <location>
        <position position="310"/>
    </location>
</feature>
<feature type="mutagenesis site" description="Production of mainly 3-hydroxyflavanone; when associated with T-375." evidence="5">
    <original>L</original>
    <variation>I</variation>
    <location>
        <position position="371"/>
    </location>
</feature>
<feature type="mutagenesis site" description="Total loss of catalytic activity. 5% activity and production of mainly 3-hydroxyflavanone; when associated with T-375. 0.1% activity and production of only flavone; when associated with T-310 and T-375." evidence="5">
    <original>L</original>
    <variation>V</variation>
    <location>
        <position position="371"/>
    </location>
</feature>
<feature type="mutagenesis site" description="Loss of intramolecular 1,2-aryl migration and production of only 3-hydroxyflavanone." evidence="4 5">
    <original>K</original>
    <variation>A</variation>
    <variation>R</variation>
    <location>
        <position position="375"/>
    </location>
</feature>
<feature type="mutagenesis site" description="Loss of intramolecular 1,2-aryl migration and production of only 3-hydroxyflavanone. 5% activity and production of mainly 3-hydroxyflavanone; when associated with T-310; I-371 or V-371. 0.1% activity and production of only flavone; when associated with T-310 and V-371." evidence="4 5">
    <original>K</original>
    <variation>T</variation>
    <location>
        <position position="375"/>
    </location>
</feature>
<keyword id="KW-0256">Endoplasmic reticulum</keyword>
<keyword id="KW-0349">Heme</keyword>
<keyword id="KW-0408">Iron</keyword>
<keyword id="KW-0472">Membrane</keyword>
<keyword id="KW-0479">Metal-binding</keyword>
<keyword id="KW-0492">Microsome</keyword>
<keyword id="KW-0503">Monooxygenase</keyword>
<keyword id="KW-0521">NADP</keyword>
<keyword id="KW-0560">Oxidoreductase</keyword>
<keyword id="KW-0812">Transmembrane</keyword>
<keyword id="KW-1133">Transmembrane helix</keyword>